<organism>
    <name type="scientific">Streptococcus pyogenes serotype M18 (strain MGAS8232)</name>
    <dbReference type="NCBI Taxonomy" id="186103"/>
    <lineage>
        <taxon>Bacteria</taxon>
        <taxon>Bacillati</taxon>
        <taxon>Bacillota</taxon>
        <taxon>Bacilli</taxon>
        <taxon>Lactobacillales</taxon>
        <taxon>Streptococcaceae</taxon>
        <taxon>Streptococcus</taxon>
    </lineage>
</organism>
<dbReference type="EC" id="2.7.4.25" evidence="1"/>
<dbReference type="EMBL" id="AE009949">
    <property type="protein sequence ID" value="AAL97519.1"/>
    <property type="molecule type" value="Genomic_DNA"/>
</dbReference>
<dbReference type="RefSeq" id="WP_011017636.1">
    <property type="nucleotide sequence ID" value="NC_003485.1"/>
</dbReference>
<dbReference type="SMR" id="Q8P1H8"/>
<dbReference type="KEGG" id="spm:spyM18_0865"/>
<dbReference type="HOGENOM" id="CLU_079959_0_2_9"/>
<dbReference type="GO" id="GO:0005829">
    <property type="term" value="C:cytosol"/>
    <property type="evidence" value="ECO:0007669"/>
    <property type="project" value="TreeGrafter"/>
</dbReference>
<dbReference type="GO" id="GO:0005524">
    <property type="term" value="F:ATP binding"/>
    <property type="evidence" value="ECO:0007669"/>
    <property type="project" value="UniProtKB-UniRule"/>
</dbReference>
<dbReference type="GO" id="GO:0036430">
    <property type="term" value="F:CMP kinase activity"/>
    <property type="evidence" value="ECO:0007669"/>
    <property type="project" value="RHEA"/>
</dbReference>
<dbReference type="GO" id="GO:0036431">
    <property type="term" value="F:dCMP kinase activity"/>
    <property type="evidence" value="ECO:0007669"/>
    <property type="project" value="RHEA"/>
</dbReference>
<dbReference type="GO" id="GO:0015949">
    <property type="term" value="P:nucleobase-containing small molecule interconversion"/>
    <property type="evidence" value="ECO:0007669"/>
    <property type="project" value="TreeGrafter"/>
</dbReference>
<dbReference type="GO" id="GO:0006220">
    <property type="term" value="P:pyrimidine nucleotide metabolic process"/>
    <property type="evidence" value="ECO:0007669"/>
    <property type="project" value="UniProtKB-UniRule"/>
</dbReference>
<dbReference type="CDD" id="cd02020">
    <property type="entry name" value="CMPK"/>
    <property type="match status" value="1"/>
</dbReference>
<dbReference type="FunFam" id="3.40.50.300:FF:000484">
    <property type="entry name" value="Cytidylate kinase"/>
    <property type="match status" value="1"/>
</dbReference>
<dbReference type="Gene3D" id="3.40.50.300">
    <property type="entry name" value="P-loop containing nucleotide triphosphate hydrolases"/>
    <property type="match status" value="1"/>
</dbReference>
<dbReference type="HAMAP" id="MF_00238">
    <property type="entry name" value="Cytidyl_kinase_type1"/>
    <property type="match status" value="1"/>
</dbReference>
<dbReference type="InterPro" id="IPR003136">
    <property type="entry name" value="Cytidylate_kin"/>
</dbReference>
<dbReference type="InterPro" id="IPR011994">
    <property type="entry name" value="Cytidylate_kinase_dom"/>
</dbReference>
<dbReference type="InterPro" id="IPR027417">
    <property type="entry name" value="P-loop_NTPase"/>
</dbReference>
<dbReference type="NCBIfam" id="TIGR00017">
    <property type="entry name" value="cmk"/>
    <property type="match status" value="1"/>
</dbReference>
<dbReference type="PANTHER" id="PTHR21299:SF2">
    <property type="entry name" value="CYTIDYLATE KINASE"/>
    <property type="match status" value="1"/>
</dbReference>
<dbReference type="PANTHER" id="PTHR21299">
    <property type="entry name" value="CYTIDYLATE KINASE/PANTOATE-BETA-ALANINE LIGASE"/>
    <property type="match status" value="1"/>
</dbReference>
<dbReference type="Pfam" id="PF02224">
    <property type="entry name" value="Cytidylate_kin"/>
    <property type="match status" value="1"/>
</dbReference>
<dbReference type="SUPFAM" id="SSF52540">
    <property type="entry name" value="P-loop containing nucleoside triphosphate hydrolases"/>
    <property type="match status" value="1"/>
</dbReference>
<protein>
    <recommendedName>
        <fullName evidence="1">Cytidylate kinase</fullName>
        <shortName evidence="1">CK</shortName>
        <ecNumber evidence="1">2.7.4.25</ecNumber>
    </recommendedName>
    <alternativeName>
        <fullName evidence="1">Cytidine monophosphate kinase</fullName>
        <shortName evidence="1">CMP kinase</shortName>
    </alternativeName>
</protein>
<evidence type="ECO:0000255" key="1">
    <source>
        <dbReference type="HAMAP-Rule" id="MF_00238"/>
    </source>
</evidence>
<proteinExistence type="inferred from homology"/>
<name>KCY_STRP8</name>
<comment type="catalytic activity">
    <reaction evidence="1">
        <text>CMP + ATP = CDP + ADP</text>
        <dbReference type="Rhea" id="RHEA:11600"/>
        <dbReference type="ChEBI" id="CHEBI:30616"/>
        <dbReference type="ChEBI" id="CHEBI:58069"/>
        <dbReference type="ChEBI" id="CHEBI:60377"/>
        <dbReference type="ChEBI" id="CHEBI:456216"/>
        <dbReference type="EC" id="2.7.4.25"/>
    </reaction>
</comment>
<comment type="catalytic activity">
    <reaction evidence="1">
        <text>dCMP + ATP = dCDP + ADP</text>
        <dbReference type="Rhea" id="RHEA:25094"/>
        <dbReference type="ChEBI" id="CHEBI:30616"/>
        <dbReference type="ChEBI" id="CHEBI:57566"/>
        <dbReference type="ChEBI" id="CHEBI:58593"/>
        <dbReference type="ChEBI" id="CHEBI:456216"/>
        <dbReference type="EC" id="2.7.4.25"/>
    </reaction>
</comment>
<comment type="subcellular location">
    <subcellularLocation>
        <location evidence="1">Cytoplasm</location>
    </subcellularLocation>
</comment>
<comment type="similarity">
    <text evidence="1">Belongs to the cytidylate kinase family. Type 1 subfamily.</text>
</comment>
<reference key="1">
    <citation type="journal article" date="2002" name="Proc. Natl. Acad. Sci. U.S.A.">
        <title>Genome sequence and comparative microarray analysis of serotype M18 group A Streptococcus strains associated with acute rheumatic fever outbreaks.</title>
        <authorList>
            <person name="Smoot J.C."/>
            <person name="Barbian K.D."/>
            <person name="Van Gompel J.J."/>
            <person name="Smoot L.M."/>
            <person name="Chaussee M.S."/>
            <person name="Sylva G.L."/>
            <person name="Sturdevant D.E."/>
            <person name="Ricklefs S.M."/>
            <person name="Porcella S.F."/>
            <person name="Parkins L.D."/>
            <person name="Beres S.B."/>
            <person name="Campbell D.S."/>
            <person name="Smith T.M."/>
            <person name="Zhang Q."/>
            <person name="Kapur V."/>
            <person name="Daly J.A."/>
            <person name="Veasy L.G."/>
            <person name="Musser J.M."/>
        </authorList>
    </citation>
    <scope>NUCLEOTIDE SEQUENCE [LARGE SCALE GENOMIC DNA]</scope>
    <source>
        <strain>MGAS8232</strain>
    </source>
</reference>
<gene>
    <name evidence="1" type="primary">cmk</name>
    <name type="ordered locus">spyM18_0865</name>
</gene>
<keyword id="KW-0067">ATP-binding</keyword>
<keyword id="KW-0963">Cytoplasm</keyword>
<keyword id="KW-0418">Kinase</keyword>
<keyword id="KW-0547">Nucleotide-binding</keyword>
<keyword id="KW-0808">Transferase</keyword>
<sequence length="226" mass="24960">MKAIKIAIDGPASSGKSTVAKIIAKNLGYTYLDTGAMYRSATYIALTHGYTDKEVALILEELEKNPISFKKAKGGSQLVFLGDEDVTLAIRQNDVTNNVSWVSALPEIREELVHQQRRIAQAGGIIMDGRDIGTVVLPDAELKIFLVASVEERAERRYKENLEKGIESDFETLKEEIAARDYKDSHRKVSPLKAAEDALIFDTTGVSIDGVVQFIQEKAEKIVDMS</sequence>
<feature type="chain" id="PRO_0000131990" description="Cytidylate kinase">
    <location>
        <begin position="1"/>
        <end position="226"/>
    </location>
</feature>
<feature type="binding site" evidence="1">
    <location>
        <begin position="10"/>
        <end position="18"/>
    </location>
    <ligand>
        <name>ATP</name>
        <dbReference type="ChEBI" id="CHEBI:30616"/>
    </ligand>
</feature>
<accession>Q8P1H8</accession>